<organism>
    <name type="scientific">Halobacterium salinarum (strain ATCC 29341 / DSM 671 / R1)</name>
    <dbReference type="NCBI Taxonomy" id="478009"/>
    <lineage>
        <taxon>Archaea</taxon>
        <taxon>Methanobacteriati</taxon>
        <taxon>Methanobacteriota</taxon>
        <taxon>Stenosarchaea group</taxon>
        <taxon>Halobacteria</taxon>
        <taxon>Halobacteriales</taxon>
        <taxon>Halobacteriaceae</taxon>
        <taxon>Halobacterium</taxon>
        <taxon>Halobacterium salinarum NRC-34001</taxon>
    </lineage>
</organism>
<accession>B0R7I0</accession>
<reference key="1">
    <citation type="journal article" date="2008" name="Genomics">
        <title>Evolution in the laboratory: the genome of Halobacterium salinarum strain R1 compared to that of strain NRC-1.</title>
        <authorList>
            <person name="Pfeiffer F."/>
            <person name="Schuster S.C."/>
            <person name="Broicher A."/>
            <person name="Falb M."/>
            <person name="Palm P."/>
            <person name="Rodewald K."/>
            <person name="Ruepp A."/>
            <person name="Soppa J."/>
            <person name="Tittor J."/>
            <person name="Oesterhelt D."/>
        </authorList>
    </citation>
    <scope>NUCLEOTIDE SEQUENCE [LARGE SCALE GENOMIC DNA]</scope>
    <source>
        <strain>ATCC 29341 / DSM 671 / R1</strain>
    </source>
</reference>
<dbReference type="EC" id="6.1.1.7" evidence="1"/>
<dbReference type="EMBL" id="AM774415">
    <property type="protein sequence ID" value="CAP14699.1"/>
    <property type="molecule type" value="Genomic_DNA"/>
</dbReference>
<dbReference type="RefSeq" id="WP_010903698.1">
    <property type="nucleotide sequence ID" value="NC_010364.1"/>
</dbReference>
<dbReference type="SMR" id="B0R7I0"/>
<dbReference type="EnsemblBacteria" id="CAP14699">
    <property type="protein sequence ID" value="CAP14699"/>
    <property type="gene ID" value="OE_4198F"/>
</dbReference>
<dbReference type="GeneID" id="68694829"/>
<dbReference type="KEGG" id="hsl:OE_4198F"/>
<dbReference type="HOGENOM" id="CLU_004485_4_0_2"/>
<dbReference type="PhylomeDB" id="B0R7I0"/>
<dbReference type="Proteomes" id="UP000001321">
    <property type="component" value="Chromosome"/>
</dbReference>
<dbReference type="GO" id="GO:0005737">
    <property type="term" value="C:cytoplasm"/>
    <property type="evidence" value="ECO:0007669"/>
    <property type="project" value="UniProtKB-SubCell"/>
</dbReference>
<dbReference type="GO" id="GO:0004813">
    <property type="term" value="F:alanine-tRNA ligase activity"/>
    <property type="evidence" value="ECO:0007669"/>
    <property type="project" value="UniProtKB-UniRule"/>
</dbReference>
<dbReference type="GO" id="GO:0002161">
    <property type="term" value="F:aminoacyl-tRNA deacylase activity"/>
    <property type="evidence" value="ECO:0007669"/>
    <property type="project" value="TreeGrafter"/>
</dbReference>
<dbReference type="GO" id="GO:0005524">
    <property type="term" value="F:ATP binding"/>
    <property type="evidence" value="ECO:0007669"/>
    <property type="project" value="UniProtKB-UniRule"/>
</dbReference>
<dbReference type="GO" id="GO:0000049">
    <property type="term" value="F:tRNA binding"/>
    <property type="evidence" value="ECO:0007669"/>
    <property type="project" value="UniProtKB-KW"/>
</dbReference>
<dbReference type="GO" id="GO:0008270">
    <property type="term" value="F:zinc ion binding"/>
    <property type="evidence" value="ECO:0007669"/>
    <property type="project" value="UniProtKB-UniRule"/>
</dbReference>
<dbReference type="GO" id="GO:0006419">
    <property type="term" value="P:alanyl-tRNA aminoacylation"/>
    <property type="evidence" value="ECO:0007669"/>
    <property type="project" value="UniProtKB-UniRule"/>
</dbReference>
<dbReference type="FunFam" id="3.10.310.40:FF:000001">
    <property type="entry name" value="Alanine--tRNA ligase"/>
    <property type="match status" value="1"/>
</dbReference>
<dbReference type="FunFam" id="3.30.54.20:FF:000005">
    <property type="entry name" value="Alanine--tRNA ligase"/>
    <property type="match status" value="1"/>
</dbReference>
<dbReference type="FunFam" id="3.30.930.10:FF:000056">
    <property type="entry name" value="Alanine--tRNA ligase"/>
    <property type="match status" value="1"/>
</dbReference>
<dbReference type="Gene3D" id="2.40.30.130">
    <property type="match status" value="1"/>
</dbReference>
<dbReference type="Gene3D" id="3.10.310.40">
    <property type="match status" value="1"/>
</dbReference>
<dbReference type="Gene3D" id="3.30.54.20">
    <property type="match status" value="1"/>
</dbReference>
<dbReference type="Gene3D" id="6.10.250.550">
    <property type="match status" value="1"/>
</dbReference>
<dbReference type="Gene3D" id="3.30.930.10">
    <property type="entry name" value="Bira Bifunctional Protein, Domain 2"/>
    <property type="match status" value="1"/>
</dbReference>
<dbReference type="Gene3D" id="3.30.980.10">
    <property type="entry name" value="Threonyl-trna Synthetase, Chain A, domain 2"/>
    <property type="match status" value="1"/>
</dbReference>
<dbReference type="HAMAP" id="MF_00036_A">
    <property type="entry name" value="Ala_tRNA_synth_A"/>
    <property type="match status" value="1"/>
</dbReference>
<dbReference type="InterPro" id="IPR045864">
    <property type="entry name" value="aa-tRNA-synth_II/BPL/LPL"/>
</dbReference>
<dbReference type="InterPro" id="IPR002318">
    <property type="entry name" value="Ala-tRNA-lgiase_IIc"/>
</dbReference>
<dbReference type="InterPro" id="IPR018162">
    <property type="entry name" value="Ala-tRNA-ligase_IIc_anticod-bd"/>
</dbReference>
<dbReference type="InterPro" id="IPR018165">
    <property type="entry name" value="Ala-tRNA-synth_IIc_core"/>
</dbReference>
<dbReference type="InterPro" id="IPR018164">
    <property type="entry name" value="Ala-tRNA-synth_IIc_N"/>
</dbReference>
<dbReference type="InterPro" id="IPR022429">
    <property type="entry name" value="Ala-tRNA_lgiase_arc"/>
</dbReference>
<dbReference type="InterPro" id="IPR050058">
    <property type="entry name" value="Ala-tRNA_ligase"/>
</dbReference>
<dbReference type="InterPro" id="IPR003156">
    <property type="entry name" value="DHHA1_dom"/>
</dbReference>
<dbReference type="InterPro" id="IPR018163">
    <property type="entry name" value="Thr/Ala-tRNA-synth_IIc_edit"/>
</dbReference>
<dbReference type="InterPro" id="IPR009000">
    <property type="entry name" value="Transl_B-barrel_sf"/>
</dbReference>
<dbReference type="InterPro" id="IPR012947">
    <property type="entry name" value="tRNA_SAD"/>
</dbReference>
<dbReference type="NCBIfam" id="TIGR03683">
    <property type="entry name" value="A-tRNA_syn_arch"/>
    <property type="match status" value="1"/>
</dbReference>
<dbReference type="NCBIfam" id="TIGR00344">
    <property type="entry name" value="alaS"/>
    <property type="match status" value="1"/>
</dbReference>
<dbReference type="PANTHER" id="PTHR11777:SF9">
    <property type="entry name" value="ALANINE--TRNA LIGASE, CYTOPLASMIC"/>
    <property type="match status" value="1"/>
</dbReference>
<dbReference type="PANTHER" id="PTHR11777">
    <property type="entry name" value="ALANYL-TRNA SYNTHETASE"/>
    <property type="match status" value="1"/>
</dbReference>
<dbReference type="Pfam" id="PF02272">
    <property type="entry name" value="DHHA1"/>
    <property type="match status" value="1"/>
</dbReference>
<dbReference type="Pfam" id="PF01411">
    <property type="entry name" value="tRNA-synt_2c"/>
    <property type="match status" value="1"/>
</dbReference>
<dbReference type="Pfam" id="PF07973">
    <property type="entry name" value="tRNA_SAD"/>
    <property type="match status" value="1"/>
</dbReference>
<dbReference type="PRINTS" id="PR00980">
    <property type="entry name" value="TRNASYNTHALA"/>
</dbReference>
<dbReference type="SMART" id="SM00863">
    <property type="entry name" value="tRNA_SAD"/>
    <property type="match status" value="1"/>
</dbReference>
<dbReference type="SUPFAM" id="SSF55681">
    <property type="entry name" value="Class II aaRS and biotin synthetases"/>
    <property type="match status" value="1"/>
</dbReference>
<dbReference type="SUPFAM" id="SSF101353">
    <property type="entry name" value="Putative anticodon-binding domain of alanyl-tRNA synthetase (AlaRS)"/>
    <property type="match status" value="1"/>
</dbReference>
<dbReference type="SUPFAM" id="SSF55186">
    <property type="entry name" value="ThrRS/AlaRS common domain"/>
    <property type="match status" value="1"/>
</dbReference>
<dbReference type="SUPFAM" id="SSF50447">
    <property type="entry name" value="Translation proteins"/>
    <property type="match status" value="1"/>
</dbReference>
<dbReference type="PROSITE" id="PS50860">
    <property type="entry name" value="AA_TRNA_LIGASE_II_ALA"/>
    <property type="match status" value="1"/>
</dbReference>
<feature type="chain" id="PRO_0000347879" description="Alanine--tRNA ligase">
    <location>
        <begin position="1"/>
        <end position="929"/>
    </location>
</feature>
<feature type="binding site" evidence="1">
    <location>
        <position position="619"/>
    </location>
    <ligand>
        <name>Zn(2+)</name>
        <dbReference type="ChEBI" id="CHEBI:29105"/>
    </ligand>
</feature>
<feature type="binding site" evidence="1">
    <location>
        <position position="623"/>
    </location>
    <ligand>
        <name>Zn(2+)</name>
        <dbReference type="ChEBI" id="CHEBI:29105"/>
    </ligand>
</feature>
<feature type="binding site" evidence="1">
    <location>
        <position position="722"/>
    </location>
    <ligand>
        <name>Zn(2+)</name>
        <dbReference type="ChEBI" id="CHEBI:29105"/>
    </ligand>
</feature>
<feature type="binding site" evidence="1">
    <location>
        <position position="726"/>
    </location>
    <ligand>
        <name>Zn(2+)</name>
        <dbReference type="ChEBI" id="CHEBI:29105"/>
    </ligand>
</feature>
<proteinExistence type="inferred from homology"/>
<sequence>MSDLESAYRLEYFEEEGFHRRECVSCGAHFWTRDGDRETCGEPPCEDYQFIDNPGFDASYSLTEMRSAMVSYFERAGHDSIDPYPVAANRWRDDVLLTQASIYDFQPHVTSGASPPPANPLVVSQPCIRMQDIDNVGKTGRHTMAFEMLGHHAFNADEGTDYAYDGEVYWKDTAVEHCEGLLADVGVSLDEVTFIEDPWVGGGNAGAAFEVIYRGLELATLVFMSLERDPDGEYEMKDGHTYAEMDRRVVDTGYGVERWTWMSQGTPTVYEAVYPDTIDFLKEQAGIEHTDEEAELVHRASKHAGNLDIDEVADIEDARAGIAAELGVDAERLTELVAPLEDIYAIADHSRVLAYMFGDGIVPSNVGTGYLARMVLRRTKRLVDDIGADVPLDELVDMQADRLGYENRDTIRSIVRSEVEKYGETLERGGRRVEQLAEEYADRGEPVPTDELIELYDSHGIQPGMVADIAADVGATVDAPDDFYSLVAARHDDGDSGAAGGDGGGDDRLADLPETETLYYDDAYGSEFEAVVLDVFEREGEDGDGAFDVVLDQTMFYPEGGGQPADTGVLTGDDHTVDVIDVQERDGVVLHRTTDNPGKGEFVRGQIDTERRRRLMAHHTATHIVVYAARQVLGEHVRQAGAQKGVDSSRIDVTHYERVDRETVKEIERVANEIVRANTSVQCEWPDRHEAEAEYGFDLYQGGIPAGEQIRLVHVDDDVQACGGTHVARTGEIGSIKILNAERVQDGVERLTFAAGAAAVEHVQGQEDDLRAAAEVLDVTPAEVPETAERFFTEWKDRGKTIDDLKEQLAEARASGGGAGEEVDVAGTTAVVQRVDGDMDELQATANALVDGGQVAVVGSGADGAQFVVGVPDGVPVNAGEVVGELAAMVGGGGGGPPDFAQGGGPDAERLDDALSRAADVLGDAASAE</sequence>
<name>SYA_HALS3</name>
<comment type="function">
    <text evidence="1">Catalyzes the attachment of alanine to tRNA(Ala) in a two-step reaction: alanine is first activated by ATP to form Ala-AMP and then transferred to the acceptor end of tRNA(Ala). Also edits incorrectly charged Ser-tRNA(Ala) and Gly-tRNA(Ala) via its editing domain.</text>
</comment>
<comment type="catalytic activity">
    <reaction evidence="1">
        <text>tRNA(Ala) + L-alanine + ATP = L-alanyl-tRNA(Ala) + AMP + diphosphate</text>
        <dbReference type="Rhea" id="RHEA:12540"/>
        <dbReference type="Rhea" id="RHEA-COMP:9657"/>
        <dbReference type="Rhea" id="RHEA-COMP:9923"/>
        <dbReference type="ChEBI" id="CHEBI:30616"/>
        <dbReference type="ChEBI" id="CHEBI:33019"/>
        <dbReference type="ChEBI" id="CHEBI:57972"/>
        <dbReference type="ChEBI" id="CHEBI:78442"/>
        <dbReference type="ChEBI" id="CHEBI:78497"/>
        <dbReference type="ChEBI" id="CHEBI:456215"/>
        <dbReference type="EC" id="6.1.1.7"/>
    </reaction>
</comment>
<comment type="cofactor">
    <cofactor evidence="1">
        <name>Zn(2+)</name>
        <dbReference type="ChEBI" id="CHEBI:29105"/>
    </cofactor>
    <text evidence="1">Binds 1 zinc ion per subunit.</text>
</comment>
<comment type="subcellular location">
    <subcellularLocation>
        <location evidence="1">Cytoplasm</location>
    </subcellularLocation>
</comment>
<comment type="domain">
    <text evidence="1">Consists of three domains; the N-terminal catalytic domain, the editing domain and the C-terminal C-Ala domain. The editing domain removes incorrectly charged amino acids, while the C-Ala domain, along with tRNA(Ala), serves as a bridge to cooperatively bring together the editing and aminoacylation centers thus stimulating deacylation of misacylated tRNAs.</text>
</comment>
<comment type="similarity">
    <text evidence="1">Belongs to the class-II aminoacyl-tRNA synthetase family.</text>
</comment>
<gene>
    <name evidence="1" type="primary">alaS</name>
    <name type="ordered locus">OE_4198F</name>
</gene>
<protein>
    <recommendedName>
        <fullName evidence="1">Alanine--tRNA ligase</fullName>
        <ecNumber evidence="1">6.1.1.7</ecNumber>
    </recommendedName>
    <alternativeName>
        <fullName evidence="1">Alanyl-tRNA synthetase</fullName>
        <shortName evidence="1">AlaRS</shortName>
    </alternativeName>
</protein>
<evidence type="ECO:0000255" key="1">
    <source>
        <dbReference type="HAMAP-Rule" id="MF_00036"/>
    </source>
</evidence>
<keyword id="KW-0030">Aminoacyl-tRNA synthetase</keyword>
<keyword id="KW-0067">ATP-binding</keyword>
<keyword id="KW-0963">Cytoplasm</keyword>
<keyword id="KW-0436">Ligase</keyword>
<keyword id="KW-0479">Metal-binding</keyword>
<keyword id="KW-0547">Nucleotide-binding</keyword>
<keyword id="KW-0648">Protein biosynthesis</keyword>
<keyword id="KW-0694">RNA-binding</keyword>
<keyword id="KW-0820">tRNA-binding</keyword>
<keyword id="KW-0862">Zinc</keyword>